<comment type="function">
    <text evidence="2">Dioxygenase that mediates demethylation of DNA and RNA containing 1-methyladenosine (m1A). Repairs alkylated DNA containing 1-methyladenosine (m1A) and 3-methylcytosine (m3C) by oxidative demethylation. Has a strong preference for single-stranded DNA. Able to process alkylated m3C within double-stranded regions via its interaction with ASCC3, which promotes DNA unwinding to generate single-stranded substrate needed for ALKBH3. Can repair exocyclic 3,N4-ethenocytosine adducs in single-stranded DNA. Also acts on RNA. Demethylates N(1)-methyladenosine (m1A) RNA, an epigenetic internal modification of messenger RNAs (mRNAs) highly enriched within 5'-untranslated regions (UTRs) and in the vicinity of start codons. Requires molecular oxygen, alpha-ketoglutarate and iron.</text>
</comment>
<comment type="catalytic activity">
    <reaction evidence="2">
        <text>an N(1)-methyladenosine in mRNA + 2-oxoglutarate + O2 = an adenosine in mRNA + formaldehyde + succinate + CO2</text>
        <dbReference type="Rhea" id="RHEA:49516"/>
        <dbReference type="Rhea" id="RHEA-COMP:12414"/>
        <dbReference type="Rhea" id="RHEA-COMP:12415"/>
        <dbReference type="ChEBI" id="CHEBI:15379"/>
        <dbReference type="ChEBI" id="CHEBI:16526"/>
        <dbReference type="ChEBI" id="CHEBI:16810"/>
        <dbReference type="ChEBI" id="CHEBI:16842"/>
        <dbReference type="ChEBI" id="CHEBI:30031"/>
        <dbReference type="ChEBI" id="CHEBI:74411"/>
        <dbReference type="ChEBI" id="CHEBI:74491"/>
        <dbReference type="EC" id="1.14.11.54"/>
    </reaction>
</comment>
<comment type="catalytic activity">
    <reaction evidence="2">
        <text>a methylated nucleobase within DNA + 2-oxoglutarate + O2 = a nucleobase within DNA + formaldehyde + succinate + CO2</text>
        <dbReference type="Rhea" id="RHEA:30299"/>
        <dbReference type="Rhea" id="RHEA-COMP:12192"/>
        <dbReference type="Rhea" id="RHEA-COMP:12193"/>
        <dbReference type="ChEBI" id="CHEBI:15379"/>
        <dbReference type="ChEBI" id="CHEBI:16526"/>
        <dbReference type="ChEBI" id="CHEBI:16810"/>
        <dbReference type="ChEBI" id="CHEBI:16842"/>
        <dbReference type="ChEBI" id="CHEBI:30031"/>
        <dbReference type="ChEBI" id="CHEBI:32875"/>
        <dbReference type="ChEBI" id="CHEBI:64428"/>
        <dbReference type="EC" id="1.14.11.33"/>
    </reaction>
    <physiologicalReaction direction="left-to-right" evidence="2">
        <dbReference type="Rhea" id="RHEA:30300"/>
    </physiologicalReaction>
</comment>
<comment type="catalytic activity">
    <reaction evidence="2">
        <text>an N(1)-methyl-2'-deoxyadenosine in single-stranded DNA + 2-oxoglutarate + O2 = a 2'-deoxyadenosine in single-stranded DNA + formaldehyde + succinate + CO2 + H(+)</text>
        <dbReference type="Rhea" id="RHEA:70447"/>
        <dbReference type="Rhea" id="RHEA-COMP:17895"/>
        <dbReference type="Rhea" id="RHEA-COMP:17896"/>
        <dbReference type="ChEBI" id="CHEBI:15378"/>
        <dbReference type="ChEBI" id="CHEBI:15379"/>
        <dbReference type="ChEBI" id="CHEBI:16526"/>
        <dbReference type="ChEBI" id="CHEBI:16810"/>
        <dbReference type="ChEBI" id="CHEBI:16842"/>
        <dbReference type="ChEBI" id="CHEBI:30031"/>
        <dbReference type="ChEBI" id="CHEBI:90615"/>
        <dbReference type="ChEBI" id="CHEBI:139096"/>
    </reaction>
    <physiologicalReaction direction="left-to-right" evidence="2">
        <dbReference type="Rhea" id="RHEA:70448"/>
    </physiologicalReaction>
</comment>
<comment type="catalytic activity">
    <reaction evidence="2">
        <text>an N(3)-methyl-2'-deoxycytidine in single-stranded DNA + 2-oxoglutarate + O2 = a 2'-deoxycytidine in single-stranded DNA + formaldehyde + succinate + CO2 + H(+)</text>
        <dbReference type="Rhea" id="RHEA:70435"/>
        <dbReference type="Rhea" id="RHEA-COMP:12846"/>
        <dbReference type="Rhea" id="RHEA-COMP:17894"/>
        <dbReference type="ChEBI" id="CHEBI:15378"/>
        <dbReference type="ChEBI" id="CHEBI:15379"/>
        <dbReference type="ChEBI" id="CHEBI:16526"/>
        <dbReference type="ChEBI" id="CHEBI:16810"/>
        <dbReference type="ChEBI" id="CHEBI:16842"/>
        <dbReference type="ChEBI" id="CHEBI:30031"/>
        <dbReference type="ChEBI" id="CHEBI:85452"/>
        <dbReference type="ChEBI" id="CHEBI:139075"/>
    </reaction>
    <physiologicalReaction direction="left-to-right" evidence="2">
        <dbReference type="Rhea" id="RHEA:70436"/>
    </physiologicalReaction>
</comment>
<comment type="catalytic activity">
    <reaction evidence="2">
        <text>a 3,N(4)-etheno-2'-deoxycytidine in single-stranded DNA + 2-oxoglutarate + O2 + H2O = a 2'-deoxycytidine in single-stranded DNA + glyoxal + succinate + CO2</text>
        <dbReference type="Rhea" id="RHEA:70471"/>
        <dbReference type="Rhea" id="RHEA-COMP:12846"/>
        <dbReference type="Rhea" id="RHEA-COMP:17906"/>
        <dbReference type="ChEBI" id="CHEBI:15377"/>
        <dbReference type="ChEBI" id="CHEBI:15379"/>
        <dbReference type="ChEBI" id="CHEBI:16526"/>
        <dbReference type="ChEBI" id="CHEBI:16810"/>
        <dbReference type="ChEBI" id="CHEBI:30031"/>
        <dbReference type="ChEBI" id="CHEBI:34779"/>
        <dbReference type="ChEBI" id="CHEBI:85452"/>
        <dbReference type="ChEBI" id="CHEBI:189585"/>
    </reaction>
    <physiologicalReaction direction="left-to-right" evidence="2">
        <dbReference type="Rhea" id="RHEA:70472"/>
    </physiologicalReaction>
</comment>
<comment type="cofactor">
    <cofactor evidence="2">
        <name>Fe(2+)</name>
        <dbReference type="ChEBI" id="CHEBI:29033"/>
    </cofactor>
    <text evidence="2">Binds 1 Fe(2+) ion per subunit.</text>
</comment>
<comment type="activity regulation">
    <text evidence="2">Activated by ascorbate.</text>
</comment>
<comment type="subunit">
    <text evidence="2">Interacts with the ASCC complex composed of ASCC1, ASCC2 and ASCC3. Interacts directly with ASCC3, and is thereby recruited to the ASCC complex. Interacts with OTUD4; the interaction is direct. Interacts with USP7 and USP9X.</text>
</comment>
<comment type="subcellular location">
    <subcellularLocation>
        <location evidence="2">Nucleus</location>
    </subcellularLocation>
    <subcellularLocation>
        <location evidence="2">Cytoplasm</location>
    </subcellularLocation>
    <text evidence="2">Colocalizes with ASCC2 and ASCC3 in nuclear foci when cells have been exposed to alkylating agents that cause DNA damage. Predominantly localizes to the nucleus.</text>
</comment>
<comment type="PTM">
    <text evidence="2">Ubiquitinated; undergoes 'Lys-48'-linked polyubiquitination. OTUD4 promotes USP7 and USP9X-dependent deubiquitination of 'Lys-48'-polyubiquitinated ALKBH3 promoting the repair of alkylated DNA lesions.</text>
</comment>
<comment type="similarity">
    <text evidence="5">Belongs to the alkB family.</text>
</comment>
<dbReference type="EC" id="1.14.11.33" evidence="2"/>
<dbReference type="EC" id="1.14.11.54" evidence="2"/>
<dbReference type="EMBL" id="BC083756">
    <property type="protein sequence ID" value="AAH83756.1"/>
    <property type="molecule type" value="mRNA"/>
</dbReference>
<dbReference type="RefSeq" id="NP_001014202.1">
    <property type="nucleotide sequence ID" value="NM_001014180.1"/>
</dbReference>
<dbReference type="RefSeq" id="XP_006234647.1">
    <property type="nucleotide sequence ID" value="XM_006234585.5"/>
</dbReference>
<dbReference type="SMR" id="Q5XIC8"/>
<dbReference type="FunCoup" id="Q5XIC8">
    <property type="interactions" value="917"/>
</dbReference>
<dbReference type="STRING" id="10116.ENSRNOP00000030278"/>
<dbReference type="GlyGen" id="Q5XIC8">
    <property type="glycosylation" value="1 site"/>
</dbReference>
<dbReference type="PhosphoSitePlus" id="Q5XIC8"/>
<dbReference type="PaxDb" id="10116-ENSRNOP00000030278"/>
<dbReference type="Ensembl" id="ENSRNOT00000030784.6">
    <property type="protein sequence ID" value="ENSRNOP00000030278.4"/>
    <property type="gene ID" value="ENSRNOG00000021678.6"/>
</dbReference>
<dbReference type="GeneID" id="362169"/>
<dbReference type="KEGG" id="rno:362169"/>
<dbReference type="UCSC" id="RGD:1359731">
    <property type="organism name" value="rat"/>
</dbReference>
<dbReference type="AGR" id="RGD:1359731"/>
<dbReference type="CTD" id="221120"/>
<dbReference type="RGD" id="1359731">
    <property type="gene designation" value="Alkbh3"/>
</dbReference>
<dbReference type="eggNOG" id="ENOG502QW9E">
    <property type="taxonomic scope" value="Eukaryota"/>
</dbReference>
<dbReference type="GeneTree" id="ENSGT00940000157226"/>
<dbReference type="HOGENOM" id="CLU_048788_2_1_1"/>
<dbReference type="InParanoid" id="Q5XIC8"/>
<dbReference type="OMA" id="FEFHQPT"/>
<dbReference type="OrthoDB" id="545910at2759"/>
<dbReference type="PhylomeDB" id="Q5XIC8"/>
<dbReference type="TreeFam" id="TF331732"/>
<dbReference type="PRO" id="PR:Q5XIC8"/>
<dbReference type="Proteomes" id="UP000002494">
    <property type="component" value="Chromosome 3"/>
</dbReference>
<dbReference type="Bgee" id="ENSRNOG00000021678">
    <property type="expression patterns" value="Expressed in skeletal muscle tissue and 20 other cell types or tissues"/>
</dbReference>
<dbReference type="GO" id="GO:0005829">
    <property type="term" value="C:cytosol"/>
    <property type="evidence" value="ECO:0007669"/>
    <property type="project" value="Ensembl"/>
</dbReference>
<dbReference type="GO" id="GO:0005739">
    <property type="term" value="C:mitochondrion"/>
    <property type="evidence" value="ECO:0000318"/>
    <property type="project" value="GO_Central"/>
</dbReference>
<dbReference type="GO" id="GO:0005654">
    <property type="term" value="C:nucleoplasm"/>
    <property type="evidence" value="ECO:0000318"/>
    <property type="project" value="GO_Central"/>
</dbReference>
<dbReference type="GO" id="GO:0016706">
    <property type="term" value="F:2-oxoglutarate-dependent dioxygenase activity"/>
    <property type="evidence" value="ECO:0000266"/>
    <property type="project" value="RGD"/>
</dbReference>
<dbReference type="GO" id="GO:0035516">
    <property type="term" value="F:broad specificity oxidative DNA demethylase activity"/>
    <property type="evidence" value="ECO:0000250"/>
    <property type="project" value="UniProtKB"/>
</dbReference>
<dbReference type="GO" id="GO:0051747">
    <property type="term" value="F:cytosine C-5 DNA demethylase activity"/>
    <property type="evidence" value="ECO:0000266"/>
    <property type="project" value="RGD"/>
</dbReference>
<dbReference type="GO" id="GO:0008198">
    <property type="term" value="F:ferrous iron binding"/>
    <property type="evidence" value="ECO:0000250"/>
    <property type="project" value="UniProtKB"/>
</dbReference>
<dbReference type="GO" id="GO:1990930">
    <property type="term" value="F:mRNA N1-methyladenosine dioxygenase activity"/>
    <property type="evidence" value="ECO:0000250"/>
    <property type="project" value="UniProtKB"/>
</dbReference>
<dbReference type="GO" id="GO:0035515">
    <property type="term" value="F:oxidative RNA demethylase activity"/>
    <property type="evidence" value="ECO:0000266"/>
    <property type="project" value="RGD"/>
</dbReference>
<dbReference type="GO" id="GO:0008283">
    <property type="term" value="P:cell population proliferation"/>
    <property type="evidence" value="ECO:0000250"/>
    <property type="project" value="UniProtKB"/>
</dbReference>
<dbReference type="GO" id="GO:0006307">
    <property type="term" value="P:DNA alkylation repair"/>
    <property type="evidence" value="ECO:0000266"/>
    <property type="project" value="RGD"/>
</dbReference>
<dbReference type="GO" id="GO:0006281">
    <property type="term" value="P:DNA repair"/>
    <property type="evidence" value="ECO:0000318"/>
    <property type="project" value="GO_Central"/>
</dbReference>
<dbReference type="GO" id="GO:2000766">
    <property type="term" value="P:negative regulation of cytoplasmic translation"/>
    <property type="evidence" value="ECO:0000266"/>
    <property type="project" value="RGD"/>
</dbReference>
<dbReference type="FunFam" id="2.60.120.590:FF:000003">
    <property type="entry name" value="alpha-ketoglutarate-dependent dioxygenase alkB homolog 3"/>
    <property type="match status" value="1"/>
</dbReference>
<dbReference type="Gene3D" id="2.60.120.590">
    <property type="entry name" value="Alpha-ketoglutarate-dependent dioxygenase AlkB-like"/>
    <property type="match status" value="1"/>
</dbReference>
<dbReference type="InterPro" id="IPR027450">
    <property type="entry name" value="AlkB-like"/>
</dbReference>
<dbReference type="InterPro" id="IPR037151">
    <property type="entry name" value="AlkB-like_sf"/>
</dbReference>
<dbReference type="InterPro" id="IPR032854">
    <property type="entry name" value="ALKBH3"/>
</dbReference>
<dbReference type="InterPro" id="IPR005123">
    <property type="entry name" value="Oxoglu/Fe-dep_dioxygenase_dom"/>
</dbReference>
<dbReference type="PANTHER" id="PTHR31212">
    <property type="entry name" value="ALPHA-KETOGLUTARATE-DEPENDENT DIOXYGENASE ALKB HOMOLOG 3"/>
    <property type="match status" value="1"/>
</dbReference>
<dbReference type="PANTHER" id="PTHR31212:SF4">
    <property type="entry name" value="ALPHA-KETOGLUTARATE-DEPENDENT DIOXYGENASE ALKB HOMOLOG 3"/>
    <property type="match status" value="1"/>
</dbReference>
<dbReference type="Pfam" id="PF13532">
    <property type="entry name" value="2OG-FeII_Oxy_2"/>
    <property type="match status" value="1"/>
</dbReference>
<dbReference type="SUPFAM" id="SSF51197">
    <property type="entry name" value="Clavaminate synthase-like"/>
    <property type="match status" value="1"/>
</dbReference>
<dbReference type="PROSITE" id="PS51471">
    <property type="entry name" value="FE2OG_OXY"/>
    <property type="match status" value="1"/>
</dbReference>
<name>ALKB3_RAT</name>
<proteinExistence type="evidence at transcript level"/>
<accession>Q5XIC8</accession>
<evidence type="ECO:0000250" key="1">
    <source>
        <dbReference type="UniProtKB" id="Q6NS38"/>
    </source>
</evidence>
<evidence type="ECO:0000250" key="2">
    <source>
        <dbReference type="UniProtKB" id="Q96Q83"/>
    </source>
</evidence>
<evidence type="ECO:0000255" key="3">
    <source>
        <dbReference type="PROSITE-ProRule" id="PRU00805"/>
    </source>
</evidence>
<evidence type="ECO:0000256" key="4">
    <source>
        <dbReference type="SAM" id="MobiDB-lite"/>
    </source>
</evidence>
<evidence type="ECO:0000305" key="5"/>
<sequence length="295" mass="34011">MGDKRQRARVQGAWATPTKSQSAARPATPARSRPSQTPGPSWRSKEQQQCDRRFVFKEPQLVVRAAPEPRVIDREGVYEISLSPTGVSRVCLYPGFVDLKEADWILERLCQDVPWKQRMGIREDITYPQPRLTAWYGELPYTYSRVTMEPNPHWLPVLWTLKSRIEENTGHTFNSLLCNFYRDEKDSVDWHSDDEPSLGSCPVIASLSFGATRTFEMRKKPPPEENGDYTYVERVKIPLDHGTLLIMEGATQADWQHRVPKEYHSRERRVNLTFRTVYPDPRGAPGDTSAELPLR</sequence>
<protein>
    <recommendedName>
        <fullName evidence="2">Alpha-ketoglutarate-dependent dioxygenase alkB homolog 3</fullName>
        <ecNumber evidence="2">1.14.11.33</ecNumber>
        <ecNumber evidence="2">1.14.11.54</ecNumber>
    </recommendedName>
    <alternativeName>
        <fullName evidence="2">Alkylated DNA repair protein alkB homolog 3</fullName>
    </alternativeName>
</protein>
<reference key="1">
    <citation type="journal article" date="2004" name="Genome Res.">
        <title>The status, quality, and expansion of the NIH full-length cDNA project: the Mammalian Gene Collection (MGC).</title>
        <authorList>
            <consortium name="The MGC Project Team"/>
        </authorList>
    </citation>
    <scope>NUCLEOTIDE SEQUENCE [LARGE SCALE MRNA]</scope>
    <source>
        <tissue>Heart</tissue>
    </source>
</reference>
<feature type="chain" id="PRO_0000239280" description="Alpha-ketoglutarate-dependent dioxygenase alkB homolog 3">
    <location>
        <begin position="1"/>
        <end position="295"/>
    </location>
</feature>
<feature type="domain" description="Fe2OG dioxygenase" evidence="3">
    <location>
        <begin position="172"/>
        <end position="278"/>
    </location>
</feature>
<feature type="region of interest" description="Disordered" evidence="4">
    <location>
        <begin position="1"/>
        <end position="48"/>
    </location>
</feature>
<feature type="compositionally biased region" description="Low complexity" evidence="4">
    <location>
        <begin position="22"/>
        <end position="35"/>
    </location>
</feature>
<feature type="binding site" evidence="1">
    <location>
        <position position="115"/>
    </location>
    <ligand>
        <name>substrate</name>
    </ligand>
</feature>
<feature type="binding site" evidence="1">
    <location>
        <begin position="141"/>
        <end position="143"/>
    </location>
    <ligand>
        <name>substrate</name>
    </ligand>
</feature>
<feature type="binding site" evidence="2">
    <location>
        <begin position="179"/>
        <end position="181"/>
    </location>
    <ligand>
        <name>2-oxoglutarate</name>
        <dbReference type="ChEBI" id="CHEBI:16810"/>
    </ligand>
</feature>
<feature type="binding site" evidence="3">
    <location>
        <position position="191"/>
    </location>
    <ligand>
        <name>Fe cation</name>
        <dbReference type="ChEBI" id="CHEBI:24875"/>
        <note>catalytic</note>
    </ligand>
</feature>
<feature type="binding site" evidence="3">
    <location>
        <position position="193"/>
    </location>
    <ligand>
        <name>Fe cation</name>
        <dbReference type="ChEBI" id="CHEBI:24875"/>
        <note>catalytic</note>
    </ligand>
</feature>
<feature type="binding site" evidence="1">
    <location>
        <position position="194"/>
    </location>
    <ligand>
        <name>substrate</name>
    </ligand>
</feature>
<feature type="binding site" evidence="3">
    <location>
        <position position="257"/>
    </location>
    <ligand>
        <name>Fe cation</name>
        <dbReference type="ChEBI" id="CHEBI:24875"/>
        <note>catalytic</note>
    </ligand>
</feature>
<feature type="binding site" evidence="2">
    <location>
        <begin position="269"/>
        <end position="275"/>
    </location>
    <ligand>
        <name>2-oxoglutarate</name>
        <dbReference type="ChEBI" id="CHEBI:16810"/>
    </ligand>
</feature>
<feature type="binding site" evidence="2">
    <location>
        <position position="275"/>
    </location>
    <ligand>
        <name>2-oxoglutarate</name>
        <dbReference type="ChEBI" id="CHEBI:16810"/>
    </ligand>
</feature>
<feature type="modified residue" description="(4R)-5-hydroxyleucine; alternate" evidence="2">
    <location>
        <position position="177"/>
    </location>
</feature>
<feature type="modified residue" description="(4R)-5-oxoleucine; alternate" evidence="2">
    <location>
        <position position="177"/>
    </location>
</feature>
<organism>
    <name type="scientific">Rattus norvegicus</name>
    <name type="common">Rat</name>
    <dbReference type="NCBI Taxonomy" id="10116"/>
    <lineage>
        <taxon>Eukaryota</taxon>
        <taxon>Metazoa</taxon>
        <taxon>Chordata</taxon>
        <taxon>Craniata</taxon>
        <taxon>Vertebrata</taxon>
        <taxon>Euteleostomi</taxon>
        <taxon>Mammalia</taxon>
        <taxon>Eutheria</taxon>
        <taxon>Euarchontoglires</taxon>
        <taxon>Glires</taxon>
        <taxon>Rodentia</taxon>
        <taxon>Myomorpha</taxon>
        <taxon>Muroidea</taxon>
        <taxon>Muridae</taxon>
        <taxon>Murinae</taxon>
        <taxon>Rattus</taxon>
    </lineage>
</organism>
<gene>
    <name evidence="2" type="primary">Alkbh3</name>
    <name evidence="2" type="synonym">Abh3</name>
</gene>
<keyword id="KW-0963">Cytoplasm</keyword>
<keyword id="KW-0223">Dioxygenase</keyword>
<keyword id="KW-0227">DNA damage</keyword>
<keyword id="KW-0234">DNA repair</keyword>
<keyword id="KW-0379">Hydroxylation</keyword>
<keyword id="KW-0408">Iron</keyword>
<keyword id="KW-0479">Metal-binding</keyword>
<keyword id="KW-0539">Nucleus</keyword>
<keyword id="KW-0558">Oxidation</keyword>
<keyword id="KW-0560">Oxidoreductase</keyword>
<keyword id="KW-1185">Reference proteome</keyword>
<keyword id="KW-0832">Ubl conjugation</keyword>